<protein>
    <recommendedName>
        <fullName>Antihemorrhagic factor cHLP-B</fullName>
    </recommendedName>
    <alternativeName>
        <fullName>Chinese mamushi HSF-like protein B</fullName>
    </alternativeName>
</protein>
<name>FETCB_GLOBR</name>
<accession>Q5KQS2</accession>
<feature type="signal peptide" evidence="2">
    <location>
        <begin position="1"/>
        <end position="19"/>
    </location>
</feature>
<feature type="chain" id="PRO_5000052211" description="Antihemorrhagic factor cHLP-B">
    <location>
        <begin position="20"/>
        <end position="342"/>
    </location>
</feature>
<feature type="domain" description="Cystatin fetuin-A-type 1" evidence="3">
    <location>
        <begin position="20"/>
        <end position="129"/>
    </location>
</feature>
<feature type="domain" description="Cystatin fetuin-A-type 2" evidence="3">
    <location>
        <begin position="140"/>
        <end position="253"/>
    </location>
</feature>
<feature type="site" description="Cleavage; by trypsin" evidence="1">
    <location>
        <begin position="139"/>
        <end position="140"/>
    </location>
</feature>
<feature type="glycosylation site" description="N-linked (GlcNAc...) asparagine" evidence="2">
    <location>
        <position position="95"/>
    </location>
</feature>
<feature type="glycosylation site" description="N-linked (GlcNAc...) asparagine" evidence="2">
    <location>
        <position position="203"/>
    </location>
</feature>
<feature type="glycosylation site" description="N-linked (GlcNAc...) asparagine" evidence="2">
    <location>
        <position position="281"/>
    </location>
</feature>
<feature type="glycosylation site" description="N-linked (GlcNAc...) asparagine" evidence="2">
    <location>
        <position position="292"/>
    </location>
</feature>
<feature type="disulfide bond" evidence="3">
    <location>
        <begin position="28"/>
        <end position="333"/>
    </location>
</feature>
<feature type="disulfide bond" evidence="3">
    <location>
        <begin position="85"/>
        <end position="96"/>
    </location>
</feature>
<feature type="disulfide bond" evidence="3">
    <location>
        <begin position="110"/>
        <end position="128"/>
    </location>
</feature>
<feature type="disulfide bond" evidence="3">
    <location>
        <begin position="142"/>
        <end position="145"/>
    </location>
</feature>
<feature type="disulfide bond" evidence="3">
    <location>
        <begin position="204"/>
        <end position="216"/>
    </location>
</feature>
<feature type="disulfide bond" evidence="3">
    <location>
        <begin position="229"/>
        <end position="252"/>
    </location>
</feature>
<keyword id="KW-1015">Disulfide bond</keyword>
<keyword id="KW-0325">Glycoprotein</keyword>
<keyword id="KW-0481">Metalloenzyme inhibitor</keyword>
<keyword id="KW-0483">Metalloprotease inhibitor</keyword>
<keyword id="KW-0646">Protease inhibitor</keyword>
<keyword id="KW-0677">Repeat</keyword>
<keyword id="KW-0964">Secreted</keyword>
<keyword id="KW-0732">Signal</keyword>
<organism>
    <name type="scientific">Gloydius brevicauda</name>
    <name type="common">Korean slamosa snake</name>
    <name type="synonym">Agkistrodon halys brevicaudus</name>
    <dbReference type="NCBI Taxonomy" id="3148161"/>
    <lineage>
        <taxon>Eukaryota</taxon>
        <taxon>Metazoa</taxon>
        <taxon>Chordata</taxon>
        <taxon>Craniata</taxon>
        <taxon>Vertebrata</taxon>
        <taxon>Euteleostomi</taxon>
        <taxon>Lepidosauria</taxon>
        <taxon>Squamata</taxon>
        <taxon>Bifurcata</taxon>
        <taxon>Unidentata</taxon>
        <taxon>Episquamata</taxon>
        <taxon>Toxicofera</taxon>
        <taxon>Serpentes</taxon>
        <taxon>Colubroidea</taxon>
        <taxon>Viperidae</taxon>
        <taxon>Crotalinae</taxon>
        <taxon>Gloydius</taxon>
    </lineage>
</organism>
<evidence type="ECO:0000250" key="1"/>
<evidence type="ECO:0000255" key="2"/>
<evidence type="ECO:0000255" key="3">
    <source>
        <dbReference type="PROSITE-ProRule" id="PRU00861"/>
    </source>
</evidence>
<sequence length="342" mass="38504">MNSLVALVLLGQMIGSTLSHHLQSHVDCNGEDAEKWADMAVHYINEHNLHGYKQVFNVINEIHVLPRRPRGKIIILELKLLETECHVLDPTPVENCTVRPPHYHAVEGDCDVKILHDEGVDKVIGAKCHSDPDSVEDVRRNCPKCPILLPLSDPHVVDSVEYVLNKHNEKLSGHVYEVLEISRGQHKYEPEAFYVEFAIVEVNCTAQEAHDDHHHCHPNTAGENHIGFCRATVFRSHASLEKPKDEQFESDCVIFDVKEGHAHSHLIEHHIGNYNTSPGHNNTVLNLAHSHNHTSASHESHSHEHVAEVPVAVAKREVPTNTPHDHTHPVKLCPGKVHHFKL</sequence>
<comment type="function">
    <text evidence="1">Potent inhibitor of hemorrhagic activity but also proteolytic activities. Inhibition occurs by formation of a non-covalent complex between this protein and the proteinases at their metalloproteinase domains (By similarity).</text>
</comment>
<comment type="subunit">
    <text evidence="1">Homodimer.</text>
</comment>
<comment type="subcellular location">
    <subcellularLocation>
        <location evidence="1">Secreted</location>
    </subcellularLocation>
</comment>
<comment type="tissue specificity">
    <text>Expressed by the liver.</text>
</comment>
<comment type="similarity">
    <text evidence="3">Belongs to the fetuin family.</text>
</comment>
<proteinExistence type="evidence at transcript level"/>
<dbReference type="EMBL" id="AB200171">
    <property type="protein sequence ID" value="BAD88538.1"/>
    <property type="molecule type" value="mRNA"/>
</dbReference>
<dbReference type="SMR" id="Q5KQS2"/>
<dbReference type="MEROPS" id="I25.042"/>
<dbReference type="GO" id="GO:0072562">
    <property type="term" value="C:blood microparticle"/>
    <property type="evidence" value="ECO:0007669"/>
    <property type="project" value="TreeGrafter"/>
</dbReference>
<dbReference type="GO" id="GO:0031012">
    <property type="term" value="C:extracellular matrix"/>
    <property type="evidence" value="ECO:0007669"/>
    <property type="project" value="TreeGrafter"/>
</dbReference>
<dbReference type="GO" id="GO:0004869">
    <property type="term" value="F:cysteine-type endopeptidase inhibitor activity"/>
    <property type="evidence" value="ECO:0007669"/>
    <property type="project" value="InterPro"/>
</dbReference>
<dbReference type="CDD" id="cd00042">
    <property type="entry name" value="CY"/>
    <property type="match status" value="2"/>
</dbReference>
<dbReference type="FunFam" id="3.10.450.10:FF:000002">
    <property type="entry name" value="Kininogen 1"/>
    <property type="match status" value="1"/>
</dbReference>
<dbReference type="Gene3D" id="3.10.450.10">
    <property type="match status" value="2"/>
</dbReference>
<dbReference type="InterPro" id="IPR000010">
    <property type="entry name" value="Cystatin_dom"/>
</dbReference>
<dbReference type="InterPro" id="IPR025760">
    <property type="entry name" value="Cystatin_Fetuin_A"/>
</dbReference>
<dbReference type="InterPro" id="IPR046350">
    <property type="entry name" value="Cystatin_sf"/>
</dbReference>
<dbReference type="InterPro" id="IPR050735">
    <property type="entry name" value="Kininogen_Fetuin_HRG"/>
</dbReference>
<dbReference type="PANTHER" id="PTHR13814:SF6">
    <property type="entry name" value="ALPHA-2-HS-GLYCOPROTEIN"/>
    <property type="match status" value="1"/>
</dbReference>
<dbReference type="PANTHER" id="PTHR13814">
    <property type="entry name" value="FETUIN"/>
    <property type="match status" value="1"/>
</dbReference>
<dbReference type="Pfam" id="PF00031">
    <property type="entry name" value="Cystatin"/>
    <property type="match status" value="1"/>
</dbReference>
<dbReference type="SMART" id="SM00043">
    <property type="entry name" value="CY"/>
    <property type="match status" value="2"/>
</dbReference>
<dbReference type="SUPFAM" id="SSF54403">
    <property type="entry name" value="Cystatin/monellin"/>
    <property type="match status" value="2"/>
</dbReference>
<dbReference type="PROSITE" id="PS51529">
    <property type="entry name" value="CYSTATIN_FETUIN_A"/>
    <property type="match status" value="2"/>
</dbReference>
<reference key="1">
    <citation type="submission" date="2005-01" db="EMBL/GenBank/DDBJ databases">
        <title>A fetuin family antihemorrhagic factor and its homologous proteins in Chinese mamushi snake serum.</title>
        <authorList>
            <person name="Aoki N."/>
            <person name="Tsutsumi K."/>
            <person name="Deshimaru M."/>
            <person name="Terada S."/>
        </authorList>
    </citation>
    <scope>NUCLEOTIDE SEQUENCE [MRNA]</scope>
    <source>
        <tissue>Liver</tissue>
    </source>
</reference>